<evidence type="ECO:0000255" key="1"/>
<evidence type="ECO:0000256" key="2">
    <source>
        <dbReference type="SAM" id="MobiDB-lite"/>
    </source>
</evidence>
<evidence type="ECO:0000269" key="3">
    <source>
    </source>
</evidence>
<evidence type="ECO:0000269" key="4">
    <source>
    </source>
</evidence>
<evidence type="ECO:0000269" key="5">
    <source>
    </source>
</evidence>
<evidence type="ECO:0000269" key="6">
    <source>
    </source>
</evidence>
<evidence type="ECO:0000269" key="7">
    <source ref="1"/>
</evidence>
<evidence type="ECO:0000303" key="8">
    <source>
    </source>
</evidence>
<evidence type="ECO:0000303" key="9">
    <source>
    </source>
</evidence>
<evidence type="ECO:0000303" key="10">
    <source ref="1"/>
</evidence>
<evidence type="ECO:0000305" key="11"/>
<evidence type="ECO:0007744" key="12">
    <source>
        <dbReference type="PDB" id="3J7Y"/>
    </source>
</evidence>
<evidence type="ECO:0007744" key="13">
    <source>
        <dbReference type="PDB" id="5OOL"/>
    </source>
</evidence>
<evidence type="ECO:0007744" key="14">
    <source>
        <dbReference type="PDB" id="5OOM"/>
    </source>
</evidence>
<evidence type="ECO:0007744" key="15">
    <source>
        <dbReference type="PDB" id="7QH6"/>
    </source>
</evidence>
<evidence type="ECO:0007744" key="16">
    <source>
        <dbReference type="PDB" id="7QH7"/>
    </source>
</evidence>
<evidence type="ECO:0007829" key="17">
    <source>
        <dbReference type="PDB" id="7OF0"/>
    </source>
</evidence>
<keyword id="KW-0002">3D-structure</keyword>
<keyword id="KW-0025">Alternative splicing</keyword>
<keyword id="KW-0496">Mitochondrion</keyword>
<keyword id="KW-1267">Proteomics identification</keyword>
<keyword id="KW-1185">Reference proteome</keyword>
<keyword id="KW-0687">Ribonucleoprotein</keyword>
<keyword id="KW-0689">Ribosomal protein</keyword>
<keyword id="KW-0809">Transit peptide</keyword>
<reference key="1">
    <citation type="submission" date="2006-01" db="EMBL/GenBank/DDBJ databases">
        <title>Liver regeneration after partial hepatectomy.</title>
        <authorList>
            <person name="Xu C.S."/>
        </authorList>
    </citation>
    <scope>NUCLEOTIDE SEQUENCE [MRNA] (ISOFORM 3)</scope>
    <scope>VARIANT ALA-19</scope>
    <source>
        <tissue>Liver</tissue>
    </source>
</reference>
<reference key="2">
    <citation type="submission" date="2003-02" db="EMBL/GenBank/DDBJ databases">
        <title>Full-length cDNA libraries and normalization.</title>
        <authorList>
            <person name="Li W.B."/>
            <person name="Gruber C."/>
            <person name="Jessee J."/>
            <person name="Polayes D."/>
        </authorList>
    </citation>
    <scope>NUCLEOTIDE SEQUENCE [LARGE SCALE MRNA] (ISOFORM 1)</scope>
    <source>
        <tissue>Placenta</tissue>
    </source>
</reference>
<reference key="3">
    <citation type="journal article" date="2003" name="Nature">
        <title>The DNA sequence and analysis of human chromosome 14.</title>
        <authorList>
            <person name="Heilig R."/>
            <person name="Eckenberg R."/>
            <person name="Petit J.-L."/>
            <person name="Fonknechten N."/>
            <person name="Da Silva C."/>
            <person name="Cattolico L."/>
            <person name="Levy M."/>
            <person name="Barbe V."/>
            <person name="De Berardinis V."/>
            <person name="Ureta-Vidal A."/>
            <person name="Pelletier E."/>
            <person name="Vico V."/>
            <person name="Anthouard V."/>
            <person name="Rowen L."/>
            <person name="Madan A."/>
            <person name="Qin S."/>
            <person name="Sun H."/>
            <person name="Du H."/>
            <person name="Pepin K."/>
            <person name="Artiguenave F."/>
            <person name="Robert C."/>
            <person name="Cruaud C."/>
            <person name="Bruels T."/>
            <person name="Jaillon O."/>
            <person name="Friedlander L."/>
            <person name="Samson G."/>
            <person name="Brottier P."/>
            <person name="Cure S."/>
            <person name="Segurens B."/>
            <person name="Aniere F."/>
            <person name="Samain S."/>
            <person name="Crespeau H."/>
            <person name="Abbasi N."/>
            <person name="Aiach N."/>
            <person name="Boscus D."/>
            <person name="Dickhoff R."/>
            <person name="Dors M."/>
            <person name="Dubois I."/>
            <person name="Friedman C."/>
            <person name="Gouyvenoux M."/>
            <person name="James R."/>
            <person name="Madan A."/>
            <person name="Mairey-Estrada B."/>
            <person name="Mangenot S."/>
            <person name="Martins N."/>
            <person name="Menard M."/>
            <person name="Oztas S."/>
            <person name="Ratcliffe A."/>
            <person name="Shaffer T."/>
            <person name="Trask B."/>
            <person name="Vacherie B."/>
            <person name="Bellemere C."/>
            <person name="Belser C."/>
            <person name="Besnard-Gonnet M."/>
            <person name="Bartol-Mavel D."/>
            <person name="Boutard M."/>
            <person name="Briez-Silla S."/>
            <person name="Combette S."/>
            <person name="Dufosse-Laurent V."/>
            <person name="Ferron C."/>
            <person name="Lechaplais C."/>
            <person name="Louesse C."/>
            <person name="Muselet D."/>
            <person name="Magdelenat G."/>
            <person name="Pateau E."/>
            <person name="Petit E."/>
            <person name="Sirvain-Trukniewicz P."/>
            <person name="Trybou A."/>
            <person name="Vega-Czarny N."/>
            <person name="Bataille E."/>
            <person name="Bluet E."/>
            <person name="Bordelais I."/>
            <person name="Dubois M."/>
            <person name="Dumont C."/>
            <person name="Guerin T."/>
            <person name="Haffray S."/>
            <person name="Hammadi R."/>
            <person name="Muanga J."/>
            <person name="Pellouin V."/>
            <person name="Robert D."/>
            <person name="Wunderle E."/>
            <person name="Gauguet G."/>
            <person name="Roy A."/>
            <person name="Sainte-Marthe L."/>
            <person name="Verdier J."/>
            <person name="Verdier-Discala C."/>
            <person name="Hillier L.W."/>
            <person name="Fulton L."/>
            <person name="McPherson J."/>
            <person name="Matsuda F."/>
            <person name="Wilson R."/>
            <person name="Scarpelli C."/>
            <person name="Gyapay G."/>
            <person name="Wincker P."/>
            <person name="Saurin W."/>
            <person name="Quetier F."/>
            <person name="Waterston R."/>
            <person name="Hood L."/>
            <person name="Weissenbach J."/>
        </authorList>
    </citation>
    <scope>NUCLEOTIDE SEQUENCE [LARGE SCALE GENOMIC DNA]</scope>
</reference>
<reference key="4">
    <citation type="submission" date="2005-09" db="EMBL/GenBank/DDBJ databases">
        <authorList>
            <person name="Mural R.J."/>
            <person name="Istrail S."/>
            <person name="Sutton G."/>
            <person name="Florea L."/>
            <person name="Halpern A.L."/>
            <person name="Mobarry C.M."/>
            <person name="Lippert R."/>
            <person name="Walenz B."/>
            <person name="Shatkay H."/>
            <person name="Dew I."/>
            <person name="Miller J.R."/>
            <person name="Flanigan M.J."/>
            <person name="Edwards N.J."/>
            <person name="Bolanos R."/>
            <person name="Fasulo D."/>
            <person name="Halldorsson B.V."/>
            <person name="Hannenhalli S."/>
            <person name="Turner R."/>
            <person name="Yooseph S."/>
            <person name="Lu F."/>
            <person name="Nusskern D.R."/>
            <person name="Shue B.C."/>
            <person name="Zheng X.H."/>
            <person name="Zhong F."/>
            <person name="Delcher A.L."/>
            <person name="Huson D.H."/>
            <person name="Kravitz S.A."/>
            <person name="Mouchard L."/>
            <person name="Reinert K."/>
            <person name="Remington K.A."/>
            <person name="Clark A.G."/>
            <person name="Waterman M.S."/>
            <person name="Eichler E.E."/>
            <person name="Adams M.D."/>
            <person name="Hunkapiller M.W."/>
            <person name="Myers E.W."/>
            <person name="Venter J.C."/>
        </authorList>
    </citation>
    <scope>NUCLEOTIDE SEQUENCE [LARGE SCALE GENOMIC DNA]</scope>
</reference>
<reference key="5">
    <citation type="journal article" date="2004" name="Genome Res.">
        <title>The status, quality, and expansion of the NIH full-length cDNA project: the Mammalian Gene Collection (MGC).</title>
        <authorList>
            <consortium name="The MGC Project Team"/>
        </authorList>
    </citation>
    <scope>NUCLEOTIDE SEQUENCE [LARGE SCALE MRNA] (ISOFORMS 1 AND 2)</scope>
    <scope>VARIANT ALA-19</scope>
    <source>
        <tissue>Brain</tissue>
    </source>
</reference>
<reference key="6">
    <citation type="journal article" date="2001" name="J. Biol. Chem.">
        <title>The large subunit of the mammalian mitochondrial ribosome. Analysis of the complement of ribosomal proteins present.</title>
        <authorList>
            <person name="Koc E.C."/>
            <person name="Burkhart W."/>
            <person name="Blackburn K."/>
            <person name="Moyer M.B."/>
            <person name="Schlatzer D.M."/>
            <person name="Moseley A."/>
            <person name="Spremulli L.L."/>
        </authorList>
    </citation>
    <scope>IDENTIFICATION</scope>
</reference>
<reference key="7">
    <citation type="journal article" date="2015" name="Proteomics">
        <title>N-terminome analysis of the human mitochondrial proteome.</title>
        <authorList>
            <person name="Vaca Jacome A.S."/>
            <person name="Rabilloud T."/>
            <person name="Schaeffer-Reiss C."/>
            <person name="Rompais M."/>
            <person name="Ayoub D."/>
            <person name="Lane L."/>
            <person name="Bairoch A."/>
            <person name="Van Dorsselaer A."/>
            <person name="Carapito C."/>
        </authorList>
    </citation>
    <scope>IDENTIFICATION BY MASS SPECTROMETRY [LARGE SCALE ANALYSIS]</scope>
</reference>
<reference evidence="12" key="8">
    <citation type="journal article" date="2014" name="Science">
        <title>Structure of the large ribosomal subunit from human mitochondria.</title>
        <authorList>
            <person name="Brown A."/>
            <person name="Amunts A."/>
            <person name="Bai X.C."/>
            <person name="Sugimoto Y."/>
            <person name="Edwards P.C."/>
            <person name="Murshudov G."/>
            <person name="Scheres S.H."/>
            <person name="Ramakrishnan V."/>
        </authorList>
    </citation>
    <scope>STRUCTURE BY ELECTRON MICROSCOPY (3.40 ANGSTROMS) OF 6-123</scope>
    <scope>SUBCELLULAR LOCATION</scope>
    <scope>SUBUNIT</scope>
</reference>
<reference evidence="13 14" key="9">
    <citation type="journal article" date="2017" name="Nat. Struct. Mol. Biol.">
        <title>Structures of the human mitochondrial ribosome in native states of assembly.</title>
        <authorList>
            <person name="Brown A."/>
            <person name="Rathore S."/>
            <person name="Kimanius D."/>
            <person name="Aibara S."/>
            <person name="Bai X.C."/>
            <person name="Rorbach J."/>
            <person name="Amunts A."/>
            <person name="Ramakrishnan V."/>
        </authorList>
    </citation>
    <scope>STRUCTURE BY ELECTRON MICROSCOPY (3.03 ANGSTROMS)</scope>
    <scope>SUBCELLULAR LOCATION</scope>
    <scope>SUBUNIT</scope>
</reference>
<reference evidence="15 16" key="10">
    <citation type="journal article" date="2022" name="Nat. Commun.">
        <title>A late-stage assembly checkpoint of the human mitochondrial ribosome large subunit.</title>
        <authorList>
            <person name="Rebelo-Guiomar P."/>
            <person name="Pellegrino S."/>
            <person name="Dent K.C."/>
            <person name="Sas-Chen A."/>
            <person name="Miller-Fleming L."/>
            <person name="Garone C."/>
            <person name="Van Haute L."/>
            <person name="Rogan J.F."/>
            <person name="Dinan A."/>
            <person name="Firth A.E."/>
            <person name="Andrews B."/>
            <person name="Whitworth A.J."/>
            <person name="Schwartz S."/>
            <person name="Warren A.J."/>
            <person name="Minczuk M."/>
        </authorList>
    </citation>
    <scope>STRUCTURE BY ELECTRON MICROSCOPY (2.9 ANGSTROMS) IN COMPLEX WITH MTLSU</scope>
    <scope>SUBUNIT</scope>
</reference>
<sequence length="123" mass="13664">MAALGTVLFTGVRRLHCSVAAWAGGQWRLQQGLAANPSGYGPLTELPDWSYADGRPAPPMKGQLRRKAERETFARRVVLLSQEMDAGLQAWQLRQQKLQEEQRKQENALKPKGASLKSPLPSQ</sequence>
<feature type="transit peptide" description="Mitochondrion" evidence="1">
    <location>
        <begin position="1"/>
        <end position="23"/>
    </location>
</feature>
<feature type="chain" id="PRO_0000273093" description="Large ribosomal subunit protein mL52">
    <location>
        <begin position="24"/>
        <end position="123"/>
    </location>
</feature>
<feature type="region of interest" description="Disordered" evidence="2">
    <location>
        <begin position="99"/>
        <end position="123"/>
    </location>
</feature>
<feature type="compositionally biased region" description="Basic and acidic residues" evidence="2">
    <location>
        <begin position="99"/>
        <end position="109"/>
    </location>
</feature>
<feature type="splice variant" id="VSP_044560" description="In isoform 2." evidence="8">
    <location>
        <begin position="1"/>
        <end position="59"/>
    </location>
</feature>
<feature type="splice variant" id="VSP_045242" description="In isoform 3." evidence="10">
    <original>TG</original>
    <variation>S</variation>
    <location>
        <begin position="10"/>
        <end position="11"/>
    </location>
</feature>
<feature type="splice variant" id="VSP_054094" description="In isoform 4." evidence="11">
    <original>DGRPAPPMKGQLRRKAERETFARRVVLLSQEMDAG</original>
    <variation>ETSCTAVTGNGRWITSMAAQAAEVAGRTKEAGKCS</variation>
    <location>
        <begin position="53"/>
        <end position="87"/>
    </location>
</feature>
<feature type="splice variant" id="VSP_054095" description="In isoform 4." evidence="11">
    <location>
        <begin position="88"/>
        <end position="123"/>
    </location>
</feature>
<feature type="sequence variant" id="VAR_030080" description="In dbSNP:rs1135641.">
    <original>G</original>
    <variation>V</variation>
    <location>
        <position position="5"/>
    </location>
</feature>
<feature type="sequence variant" id="VAR_030081" description="In dbSNP:rs4982685." evidence="3 7">
    <original>V</original>
    <variation>A</variation>
    <location>
        <position position="19"/>
    </location>
</feature>
<feature type="sequence variant" id="VAR_052044" description="In dbSNP:rs11538931.">
    <original>K</original>
    <variation>R</variation>
    <location>
        <position position="104"/>
    </location>
</feature>
<feature type="sequence conflict" description="In Ref. 5; AAH68070." evidence="11" ref="5">
    <original>W</original>
    <variation>C</variation>
    <location>
        <position position="49"/>
    </location>
</feature>
<feature type="helix" evidence="17">
    <location>
        <begin position="25"/>
        <end position="30"/>
    </location>
</feature>
<feature type="strand" evidence="17">
    <location>
        <begin position="39"/>
        <end position="41"/>
    </location>
</feature>
<feature type="helix" evidence="17">
    <location>
        <begin position="42"/>
        <end position="45"/>
    </location>
</feature>
<feature type="strand" evidence="17">
    <location>
        <begin position="48"/>
        <end position="51"/>
    </location>
</feature>
<feature type="helix" evidence="17">
    <location>
        <begin position="61"/>
        <end position="104"/>
    </location>
</feature>
<protein>
    <recommendedName>
        <fullName evidence="9">Large ribosomal subunit protein mL52</fullName>
    </recommendedName>
    <alternativeName>
        <fullName>39S ribosomal protein L52, mitochondrial</fullName>
        <shortName>L52mt</shortName>
        <shortName>MRP-L52</shortName>
    </alternativeName>
</protein>
<name>RM52_HUMAN</name>
<comment type="subunit">
    <text evidence="4 5 6">Component of the mitochondrial large ribosomal subunit (mt-LSU) (PubMed:25278503, PubMed:28892042, PubMed:35177605). Mature mammalian 55S mitochondrial ribosomes consist of a small (28S) and a large (39S) subunit. The 28S small subunit contains a 12S ribosomal RNA (12S mt-rRNA) and 30 different proteins. The 39S large subunit contains a 16S rRNA (16S mt-rRNA), a copy of mitochondrial valine transfer RNA (mt-tRNA(Val)), which plays an integral structural role, and 52 different proteins. mL52 connects the central protuberance to the body of the ribosome.</text>
</comment>
<comment type="interaction">
    <interactant intactId="EBI-10977303">
        <id>Q86TS9</id>
    </interactant>
    <interactant intactId="EBI-720441">
        <id>Q96DV4</id>
        <label>MRPL38</label>
    </interactant>
    <organismsDiffer>false</organismsDiffer>
    <experiments>3</experiments>
</comment>
<comment type="subcellular location">
    <subcellularLocation>
        <location evidence="4 5">Mitochondrion</location>
    </subcellularLocation>
</comment>
<comment type="alternative products">
    <event type="alternative splicing"/>
    <isoform>
        <id>Q86TS9-1</id>
        <name>1</name>
        <sequence type="displayed"/>
    </isoform>
    <isoform>
        <id>Q86TS9-2</id>
        <name>2</name>
        <sequence type="described" ref="VSP_044560"/>
    </isoform>
    <isoform>
        <id>Q86TS9-3</id>
        <name>3</name>
        <sequence type="described" ref="VSP_045242"/>
    </isoform>
    <isoform>
        <id>Q86TS9-4</id>
        <name>4</name>
        <sequence type="described" ref="VSP_054094 VSP_054095"/>
    </isoform>
</comment>
<comment type="similarity">
    <text evidence="11">Belongs to the mitochondrion-specific ribosomal protein mL52 family.</text>
</comment>
<comment type="sequence caution" evidence="11">
    <conflict type="erroneous initiation">
        <sequence resource="EMBL-CDS" id="CAD66556"/>
    </conflict>
    <text>Extended N-terminus.</text>
</comment>
<dbReference type="EMBL" id="DW429620">
    <property type="status" value="NOT_ANNOTATED_CDS"/>
    <property type="molecule type" value="mRNA"/>
</dbReference>
<dbReference type="EMBL" id="BX248749">
    <property type="protein sequence ID" value="CAD66556.1"/>
    <property type="status" value="ALT_INIT"/>
    <property type="molecule type" value="mRNA"/>
</dbReference>
<dbReference type="EMBL" id="AL135998">
    <property type="status" value="NOT_ANNOTATED_CDS"/>
    <property type="molecule type" value="Genomic_DNA"/>
</dbReference>
<dbReference type="EMBL" id="CH471078">
    <property type="protein sequence ID" value="EAW66238.1"/>
    <property type="molecule type" value="Genomic_DNA"/>
</dbReference>
<dbReference type="EMBL" id="CH471078">
    <property type="protein sequence ID" value="EAW66240.1"/>
    <property type="molecule type" value="Genomic_DNA"/>
</dbReference>
<dbReference type="EMBL" id="CH471078">
    <property type="protein sequence ID" value="EAW66241.1"/>
    <property type="molecule type" value="Genomic_DNA"/>
</dbReference>
<dbReference type="EMBL" id="CH471078">
    <property type="protein sequence ID" value="EAW66242.1"/>
    <property type="molecule type" value="Genomic_DNA"/>
</dbReference>
<dbReference type="EMBL" id="CH471078">
    <property type="protein sequence ID" value="EAW66244.1"/>
    <property type="molecule type" value="Genomic_DNA"/>
</dbReference>
<dbReference type="EMBL" id="BC068070">
    <property type="protein sequence ID" value="AAH68070.1"/>
    <property type="molecule type" value="mRNA"/>
</dbReference>
<dbReference type="EMBL" id="BU600884">
    <property type="status" value="NOT_ANNOTATED_CDS"/>
    <property type="molecule type" value="mRNA"/>
</dbReference>
<dbReference type="CCDS" id="CCDS41917.1">
    <molecule id="Q86TS9-1"/>
</dbReference>
<dbReference type="CCDS" id="CCDS41918.1">
    <molecule id="Q86TS9-2"/>
</dbReference>
<dbReference type="CCDS" id="CCDS9575.1">
    <molecule id="Q86TS9-3"/>
</dbReference>
<dbReference type="CCDS" id="CCDS9576.1">
    <molecule id="Q86TS9-4"/>
</dbReference>
<dbReference type="RefSeq" id="NP_848026.1">
    <molecule id="Q86TS9-1"/>
    <property type="nucleotide sequence ID" value="NM_178336.3"/>
</dbReference>
<dbReference type="RefSeq" id="NP_851313.1">
    <molecule id="Q86TS9-3"/>
    <property type="nucleotide sequence ID" value="NM_180982.3"/>
</dbReference>
<dbReference type="RefSeq" id="NP_851821.1">
    <molecule id="Q86TS9-2"/>
    <property type="nucleotide sequence ID" value="NM_181304.3"/>
</dbReference>
<dbReference type="RefSeq" id="NP_851822.1">
    <molecule id="Q86TS9-2"/>
    <property type="nucleotide sequence ID" value="NM_181305.3"/>
</dbReference>
<dbReference type="RefSeq" id="NP_851823.1">
    <molecule id="Q86TS9-2"/>
    <property type="nucleotide sequence ID" value="NM_181306.3"/>
</dbReference>
<dbReference type="RefSeq" id="NP_851824.1">
    <molecule id="Q86TS9-4"/>
    <property type="nucleotide sequence ID" value="NM_181307.3"/>
</dbReference>
<dbReference type="RefSeq" id="XP_005267385.1">
    <property type="nucleotide sequence ID" value="XM_005267328.3"/>
</dbReference>
<dbReference type="RefSeq" id="XP_047286874.1">
    <molecule id="Q86TS9-2"/>
    <property type="nucleotide sequence ID" value="XM_047430918.1"/>
</dbReference>
<dbReference type="RefSeq" id="XP_047286875.1">
    <molecule id="Q86TS9-2"/>
    <property type="nucleotide sequence ID" value="XM_047430919.1"/>
</dbReference>
<dbReference type="RefSeq" id="XP_054231336.1">
    <molecule id="Q86TS9-2"/>
    <property type="nucleotide sequence ID" value="XM_054375361.1"/>
</dbReference>
<dbReference type="PDB" id="3J7Y">
    <property type="method" value="EM"/>
    <property type="resolution" value="3.40 A"/>
    <property type="chains" value="j=6-123"/>
</dbReference>
<dbReference type="PDB" id="5OOL">
    <property type="method" value="EM"/>
    <property type="resolution" value="3.06 A"/>
    <property type="chains" value="j=1-123"/>
</dbReference>
<dbReference type="PDB" id="5OOM">
    <property type="method" value="EM"/>
    <property type="resolution" value="3.03 A"/>
    <property type="chains" value="j=1-123"/>
</dbReference>
<dbReference type="PDB" id="6NU2">
    <property type="method" value="EM"/>
    <property type="resolution" value="3.90 A"/>
    <property type="chains" value="j=24-108"/>
</dbReference>
<dbReference type="PDB" id="6NU3">
    <property type="method" value="EM"/>
    <property type="resolution" value="4.40 A"/>
    <property type="chains" value="j=1-123"/>
</dbReference>
<dbReference type="PDB" id="6ZM5">
    <property type="method" value="EM"/>
    <property type="resolution" value="2.89 A"/>
    <property type="chains" value="j=1-123"/>
</dbReference>
<dbReference type="PDB" id="6ZM6">
    <property type="method" value="EM"/>
    <property type="resolution" value="2.59 A"/>
    <property type="chains" value="j=1-123"/>
</dbReference>
<dbReference type="PDB" id="6ZSA">
    <property type="method" value="EM"/>
    <property type="resolution" value="4.00 A"/>
    <property type="chains" value="j=1-123"/>
</dbReference>
<dbReference type="PDB" id="6ZSB">
    <property type="method" value="EM"/>
    <property type="resolution" value="4.50 A"/>
    <property type="chains" value="j=1-123"/>
</dbReference>
<dbReference type="PDB" id="6ZSC">
    <property type="method" value="EM"/>
    <property type="resolution" value="3.50 A"/>
    <property type="chains" value="j=1-123"/>
</dbReference>
<dbReference type="PDB" id="6ZSD">
    <property type="method" value="EM"/>
    <property type="resolution" value="3.70 A"/>
    <property type="chains" value="j=1-123"/>
</dbReference>
<dbReference type="PDB" id="6ZSE">
    <property type="method" value="EM"/>
    <property type="resolution" value="5.00 A"/>
    <property type="chains" value="j=1-123"/>
</dbReference>
<dbReference type="PDB" id="6ZSG">
    <property type="method" value="EM"/>
    <property type="resolution" value="4.00 A"/>
    <property type="chains" value="j=1-123"/>
</dbReference>
<dbReference type="PDB" id="7A5F">
    <property type="method" value="EM"/>
    <property type="resolution" value="4.40 A"/>
    <property type="chains" value="j3=1-123"/>
</dbReference>
<dbReference type="PDB" id="7A5G">
    <property type="method" value="EM"/>
    <property type="resolution" value="4.33 A"/>
    <property type="chains" value="j3=1-123"/>
</dbReference>
<dbReference type="PDB" id="7A5J">
    <property type="method" value="EM"/>
    <property type="resolution" value="3.10 A"/>
    <property type="chains" value="j=1-123"/>
</dbReference>
<dbReference type="PDB" id="7O9K">
    <property type="method" value="EM"/>
    <property type="resolution" value="3.10 A"/>
    <property type="chains" value="j=1-123"/>
</dbReference>
<dbReference type="PDB" id="7O9M">
    <property type="method" value="EM"/>
    <property type="resolution" value="2.50 A"/>
    <property type="chains" value="j=1-123"/>
</dbReference>
<dbReference type="PDB" id="7ODR">
    <property type="method" value="EM"/>
    <property type="resolution" value="2.90 A"/>
    <property type="chains" value="j=1-123"/>
</dbReference>
<dbReference type="PDB" id="7ODS">
    <property type="method" value="EM"/>
    <property type="resolution" value="3.10 A"/>
    <property type="chains" value="j=1-123"/>
</dbReference>
<dbReference type="PDB" id="7ODT">
    <property type="method" value="EM"/>
    <property type="resolution" value="3.10 A"/>
    <property type="chains" value="j=1-123"/>
</dbReference>
<dbReference type="PDB" id="7OF0">
    <property type="method" value="EM"/>
    <property type="resolution" value="2.20 A"/>
    <property type="chains" value="j=1-123"/>
</dbReference>
<dbReference type="PDB" id="7OF2">
    <property type="method" value="EM"/>
    <property type="resolution" value="2.70 A"/>
    <property type="chains" value="j=1-123"/>
</dbReference>
<dbReference type="PDB" id="7OF3">
    <property type="method" value="EM"/>
    <property type="resolution" value="2.70 A"/>
    <property type="chains" value="j=1-123"/>
</dbReference>
<dbReference type="PDB" id="7OF4">
    <property type="method" value="EM"/>
    <property type="resolution" value="2.70 A"/>
    <property type="chains" value="j=1-123"/>
</dbReference>
<dbReference type="PDB" id="7OF5">
    <property type="method" value="EM"/>
    <property type="resolution" value="2.90 A"/>
    <property type="chains" value="j=1-123"/>
</dbReference>
<dbReference type="PDB" id="7OF6">
    <property type="method" value="EM"/>
    <property type="resolution" value="2.60 A"/>
    <property type="chains" value="j=1-123"/>
</dbReference>
<dbReference type="PDB" id="7OF7">
    <property type="method" value="EM"/>
    <property type="resolution" value="2.50 A"/>
    <property type="chains" value="j=24-108"/>
</dbReference>
<dbReference type="PDB" id="7OG4">
    <property type="method" value="EM"/>
    <property type="resolution" value="3.80 A"/>
    <property type="chains" value="j=1-123"/>
</dbReference>
<dbReference type="PDB" id="7OI6">
    <property type="method" value="EM"/>
    <property type="resolution" value="5.70 A"/>
    <property type="chains" value="j=1-123"/>
</dbReference>
<dbReference type="PDB" id="7OI7">
    <property type="method" value="EM"/>
    <property type="resolution" value="3.50 A"/>
    <property type="chains" value="j=1-123"/>
</dbReference>
<dbReference type="PDB" id="7OI8">
    <property type="method" value="EM"/>
    <property type="resolution" value="3.50 A"/>
    <property type="chains" value="j=1-123"/>
</dbReference>
<dbReference type="PDB" id="7OI9">
    <property type="method" value="EM"/>
    <property type="resolution" value="3.30 A"/>
    <property type="chains" value="j=1-123"/>
</dbReference>
<dbReference type="PDB" id="7OIA">
    <property type="method" value="EM"/>
    <property type="resolution" value="3.20 A"/>
    <property type="chains" value="j=1-123"/>
</dbReference>
<dbReference type="PDB" id="7OIB">
    <property type="method" value="EM"/>
    <property type="resolution" value="3.30 A"/>
    <property type="chains" value="j=1-123"/>
</dbReference>
<dbReference type="PDB" id="7OIC">
    <property type="method" value="EM"/>
    <property type="resolution" value="3.10 A"/>
    <property type="chains" value="j=1-123"/>
</dbReference>
<dbReference type="PDB" id="7OID">
    <property type="method" value="EM"/>
    <property type="resolution" value="3.70 A"/>
    <property type="chains" value="j=1-123"/>
</dbReference>
<dbReference type="PDB" id="7OIE">
    <property type="method" value="EM"/>
    <property type="resolution" value="3.50 A"/>
    <property type="chains" value="j=1-123"/>
</dbReference>
<dbReference type="PDB" id="7PD3">
    <property type="method" value="EM"/>
    <property type="resolution" value="3.40 A"/>
    <property type="chains" value="j=1-123"/>
</dbReference>
<dbReference type="PDB" id="7PO4">
    <property type="method" value="EM"/>
    <property type="resolution" value="2.56 A"/>
    <property type="chains" value="j=1-123"/>
</dbReference>
<dbReference type="PDB" id="7QH6">
    <property type="method" value="EM"/>
    <property type="resolution" value="3.08 A"/>
    <property type="chains" value="j=1-123"/>
</dbReference>
<dbReference type="PDB" id="7QH7">
    <property type="method" value="EM"/>
    <property type="resolution" value="2.89 A"/>
    <property type="chains" value="j=23-108"/>
</dbReference>
<dbReference type="PDB" id="7QI4">
    <property type="method" value="EM"/>
    <property type="resolution" value="2.21 A"/>
    <property type="chains" value="j=1-123"/>
</dbReference>
<dbReference type="PDB" id="7QI5">
    <property type="method" value="EM"/>
    <property type="resolution" value="2.63 A"/>
    <property type="chains" value="j=1-123"/>
</dbReference>
<dbReference type="PDB" id="7QI6">
    <property type="method" value="EM"/>
    <property type="resolution" value="2.98 A"/>
    <property type="chains" value="j=1-123"/>
</dbReference>
<dbReference type="PDB" id="8ANY">
    <property type="method" value="EM"/>
    <property type="resolution" value="2.85 A"/>
    <property type="chains" value="j=1-123"/>
</dbReference>
<dbReference type="PDB" id="8OIR">
    <property type="method" value="EM"/>
    <property type="resolution" value="3.10 A"/>
    <property type="chains" value="Ba=1-123"/>
</dbReference>
<dbReference type="PDB" id="8OIT">
    <property type="method" value="EM"/>
    <property type="resolution" value="2.90 A"/>
    <property type="chains" value="Ba=1-123"/>
</dbReference>
<dbReference type="PDB" id="8PK0">
    <property type="method" value="EM"/>
    <property type="resolution" value="3.03 A"/>
    <property type="chains" value="j=1-123"/>
</dbReference>
<dbReference type="PDB" id="8QSJ">
    <property type="method" value="EM"/>
    <property type="resolution" value="3.00 A"/>
    <property type="chains" value="j=1-123"/>
</dbReference>
<dbReference type="PDB" id="8QU5">
    <property type="method" value="EM"/>
    <property type="resolution" value="2.42 A"/>
    <property type="chains" value="j=1-123"/>
</dbReference>
<dbReference type="PDB" id="8RRI">
    <property type="method" value="EM"/>
    <property type="resolution" value="2.40 A"/>
    <property type="chains" value="j=1-123"/>
</dbReference>
<dbReference type="PDB" id="8XT0">
    <property type="method" value="EM"/>
    <property type="resolution" value="3.20 A"/>
    <property type="chains" value="Lz=1-123"/>
</dbReference>
<dbReference type="PDB" id="8XT1">
    <property type="method" value="EM"/>
    <property type="resolution" value="3.10 A"/>
    <property type="chains" value="Lz=1-123"/>
</dbReference>
<dbReference type="PDB" id="8XT2">
    <property type="method" value="EM"/>
    <property type="resolution" value="3.30 A"/>
    <property type="chains" value="Lz=1-123"/>
</dbReference>
<dbReference type="PDB" id="8XT3">
    <property type="method" value="EM"/>
    <property type="resolution" value="3.10 A"/>
    <property type="chains" value="Lz=1-123"/>
</dbReference>
<dbReference type="PDBsum" id="3J7Y"/>
<dbReference type="PDBsum" id="5OOL"/>
<dbReference type="PDBsum" id="5OOM"/>
<dbReference type="PDBsum" id="6NU2"/>
<dbReference type="PDBsum" id="6NU3"/>
<dbReference type="PDBsum" id="6ZM5"/>
<dbReference type="PDBsum" id="6ZM6"/>
<dbReference type="PDBsum" id="6ZSA"/>
<dbReference type="PDBsum" id="6ZSB"/>
<dbReference type="PDBsum" id="6ZSC"/>
<dbReference type="PDBsum" id="6ZSD"/>
<dbReference type="PDBsum" id="6ZSE"/>
<dbReference type="PDBsum" id="6ZSG"/>
<dbReference type="PDBsum" id="7A5F"/>
<dbReference type="PDBsum" id="7A5G"/>
<dbReference type="PDBsum" id="7A5J"/>
<dbReference type="PDBsum" id="7O9K"/>
<dbReference type="PDBsum" id="7O9M"/>
<dbReference type="PDBsum" id="7ODR"/>
<dbReference type="PDBsum" id="7ODS"/>
<dbReference type="PDBsum" id="7ODT"/>
<dbReference type="PDBsum" id="7OF0"/>
<dbReference type="PDBsum" id="7OF2"/>
<dbReference type="PDBsum" id="7OF3"/>
<dbReference type="PDBsum" id="7OF4"/>
<dbReference type="PDBsum" id="7OF5"/>
<dbReference type="PDBsum" id="7OF6"/>
<dbReference type="PDBsum" id="7OF7"/>
<dbReference type="PDBsum" id="7OG4"/>
<dbReference type="PDBsum" id="7OI6"/>
<dbReference type="PDBsum" id="7OI7"/>
<dbReference type="PDBsum" id="7OI8"/>
<dbReference type="PDBsum" id="7OI9"/>
<dbReference type="PDBsum" id="7OIA"/>
<dbReference type="PDBsum" id="7OIB"/>
<dbReference type="PDBsum" id="7OIC"/>
<dbReference type="PDBsum" id="7OID"/>
<dbReference type="PDBsum" id="7OIE"/>
<dbReference type="PDBsum" id="7PD3"/>
<dbReference type="PDBsum" id="7PO4"/>
<dbReference type="PDBsum" id="7QH6"/>
<dbReference type="PDBsum" id="7QH7"/>
<dbReference type="PDBsum" id="7QI4"/>
<dbReference type="PDBsum" id="7QI5"/>
<dbReference type="PDBsum" id="7QI6"/>
<dbReference type="PDBsum" id="8ANY"/>
<dbReference type="PDBsum" id="8OIR"/>
<dbReference type="PDBsum" id="8OIT"/>
<dbReference type="PDBsum" id="8PK0"/>
<dbReference type="PDBsum" id="8QSJ"/>
<dbReference type="PDBsum" id="8QU5"/>
<dbReference type="PDBsum" id="8RRI"/>
<dbReference type="PDBsum" id="8XT0"/>
<dbReference type="PDBsum" id="8XT1"/>
<dbReference type="PDBsum" id="8XT2"/>
<dbReference type="PDBsum" id="8XT3"/>
<dbReference type="EMDB" id="EMD-0514"/>
<dbReference type="EMDB" id="EMD-0515"/>
<dbReference type="EMDB" id="EMD-11278"/>
<dbReference type="EMDB" id="EMD-11279"/>
<dbReference type="EMDB" id="EMD-11391"/>
<dbReference type="EMDB" id="EMD-11392"/>
<dbReference type="EMDB" id="EMD-11393"/>
<dbReference type="EMDB" id="EMD-11394"/>
<dbReference type="EMDB" id="EMD-11395"/>
<dbReference type="EMDB" id="EMD-11397"/>
<dbReference type="EMDB" id="EMD-11641"/>
<dbReference type="EMDB" id="EMD-11642"/>
<dbReference type="EMDB" id="EMD-11643"/>
<dbReference type="EMDB" id="EMD-11645"/>
<dbReference type="EMDB" id="EMD-11646"/>
<dbReference type="EMDB" id="EMD-12763"/>
<dbReference type="EMDB" id="EMD-12764"/>
<dbReference type="EMDB" id="EMD-12845"/>
<dbReference type="EMDB" id="EMD-12846"/>
<dbReference type="EMDB" id="EMD-12847"/>
<dbReference type="EMDB" id="EMD-12865"/>
<dbReference type="EMDB" id="EMD-12867"/>
<dbReference type="EMDB" id="EMD-12868"/>
<dbReference type="EMDB" id="EMD-12869"/>
<dbReference type="EMDB" id="EMD-12870"/>
<dbReference type="EMDB" id="EMD-12871"/>
<dbReference type="EMDB" id="EMD-12872"/>
<dbReference type="EMDB" id="EMD-12877"/>
<dbReference type="EMDB" id="EMD-12919"/>
<dbReference type="EMDB" id="EMD-12920"/>
<dbReference type="EMDB" id="EMD-12921"/>
<dbReference type="EMDB" id="EMD-12922"/>
<dbReference type="EMDB" id="EMD-12923"/>
<dbReference type="EMDB" id="EMD-12924"/>
<dbReference type="EMDB" id="EMD-12925"/>
<dbReference type="EMDB" id="EMD-12926"/>
<dbReference type="EMDB" id="EMD-12927"/>
<dbReference type="EMDB" id="EMD-13329"/>
<dbReference type="EMDB" id="EMD-13562"/>
<dbReference type="EMDB" id="EMD-13965"/>
<dbReference type="EMDB" id="EMD-13967"/>
<dbReference type="EMDB" id="EMD-13980"/>
<dbReference type="EMDB" id="EMD-13981"/>
<dbReference type="EMDB" id="EMD-13982"/>
<dbReference type="EMDB" id="EMD-15544"/>
<dbReference type="EMDB" id="EMD-16897"/>
<dbReference type="EMDB" id="EMD-16899"/>
<dbReference type="EMDB" id="EMD-17719"/>
<dbReference type="EMDB" id="EMD-19460"/>
<dbReference type="EMDB" id="EMD-3842"/>
<dbReference type="EMDB" id="EMD-3843"/>
<dbReference type="SMR" id="Q86TS9"/>
<dbReference type="BioGRID" id="125788">
    <property type="interactions" value="177"/>
</dbReference>
<dbReference type="ComplexPortal" id="CPX-5226">
    <property type="entry name" value="39S mitochondrial large ribosomal subunit"/>
</dbReference>
<dbReference type="CORUM" id="Q86TS9"/>
<dbReference type="FunCoup" id="Q86TS9">
    <property type="interactions" value="1281"/>
</dbReference>
<dbReference type="IntAct" id="Q86TS9">
    <property type="interactions" value="101"/>
</dbReference>
<dbReference type="MINT" id="Q86TS9"/>
<dbReference type="STRING" id="9606.ENSP00000347277"/>
<dbReference type="iPTMnet" id="Q86TS9"/>
<dbReference type="PhosphoSitePlus" id="Q86TS9"/>
<dbReference type="BioMuta" id="MRPL52"/>
<dbReference type="DMDM" id="124053357"/>
<dbReference type="jPOST" id="Q86TS9"/>
<dbReference type="MassIVE" id="Q86TS9"/>
<dbReference type="PaxDb" id="9606-ENSP00000347277"/>
<dbReference type="PeptideAtlas" id="Q86TS9"/>
<dbReference type="ProteomicsDB" id="1555"/>
<dbReference type="ProteomicsDB" id="33809"/>
<dbReference type="ProteomicsDB" id="69730">
    <molecule id="Q86TS9-1"/>
</dbReference>
<dbReference type="Pumba" id="Q86TS9"/>
<dbReference type="TopDownProteomics" id="Q86TS9-1">
    <molecule id="Q86TS9-1"/>
</dbReference>
<dbReference type="TopDownProteomics" id="Q86TS9-3">
    <molecule id="Q86TS9-3"/>
</dbReference>
<dbReference type="Antibodypedia" id="194">
    <property type="antibodies" value="67 antibodies from 22 providers"/>
</dbReference>
<dbReference type="DNASU" id="122704"/>
<dbReference type="Ensembl" id="ENST00000355151.9">
    <molecule id="Q86TS9-1"/>
    <property type="protein sequence ID" value="ENSP00000347277.5"/>
    <property type="gene ID" value="ENSG00000172590.18"/>
</dbReference>
<dbReference type="Ensembl" id="ENST00000397496.7">
    <molecule id="Q86TS9-3"/>
    <property type="protein sequence ID" value="ENSP00000380633.3"/>
    <property type="gene ID" value="ENSG00000172590.18"/>
</dbReference>
<dbReference type="Ensembl" id="ENST00000397505.2">
    <molecule id="Q86TS9-4"/>
    <property type="protein sequence ID" value="ENSP00000380642.2"/>
    <property type="gene ID" value="ENSG00000172590.18"/>
</dbReference>
<dbReference type="Ensembl" id="ENST00000553711.5">
    <molecule id="Q86TS9-2"/>
    <property type="protein sequence ID" value="ENSP00000451303.1"/>
    <property type="gene ID" value="ENSG00000172590.18"/>
</dbReference>
<dbReference type="Ensembl" id="ENST00000555345.5">
    <molecule id="Q86TS9-2"/>
    <property type="protein sequence ID" value="ENSP00000451081.1"/>
    <property type="gene ID" value="ENSG00000172590.18"/>
</dbReference>
<dbReference type="Ensembl" id="ENST00000556840.5">
    <molecule id="Q86TS9-2"/>
    <property type="protein sequence ID" value="ENSP00000451481.1"/>
    <property type="gene ID" value="ENSG00000172590.18"/>
</dbReference>
<dbReference type="GeneID" id="122704"/>
<dbReference type="KEGG" id="hsa:122704"/>
<dbReference type="MANE-Select" id="ENST00000397496.7">
    <molecule id="Q86TS9-3"/>
    <property type="protein sequence ID" value="ENSP00000380633.3"/>
    <property type="RefSeq nucleotide sequence ID" value="NM_180982.3"/>
    <property type="RefSeq protein sequence ID" value="NP_851313.1"/>
</dbReference>
<dbReference type="UCSC" id="uc001wgw.4">
    <molecule id="Q86TS9-1"/>
    <property type="organism name" value="human"/>
</dbReference>
<dbReference type="AGR" id="HGNC:16655"/>
<dbReference type="CTD" id="122704"/>
<dbReference type="DisGeNET" id="122704"/>
<dbReference type="GeneCards" id="MRPL52"/>
<dbReference type="HGNC" id="HGNC:16655">
    <property type="gene designation" value="MRPL52"/>
</dbReference>
<dbReference type="HPA" id="ENSG00000172590">
    <property type="expression patterns" value="Low tissue specificity"/>
</dbReference>
<dbReference type="MIM" id="611856">
    <property type="type" value="gene"/>
</dbReference>
<dbReference type="neXtProt" id="NX_Q86TS9"/>
<dbReference type="OpenTargets" id="ENSG00000172590"/>
<dbReference type="PharmGKB" id="PA30985"/>
<dbReference type="VEuPathDB" id="HostDB:ENSG00000172590"/>
<dbReference type="eggNOG" id="ENOG502S4I0">
    <property type="taxonomic scope" value="Eukaryota"/>
</dbReference>
<dbReference type="GeneTree" id="ENSGT00390000005763"/>
<dbReference type="HOGENOM" id="CLU_135844_0_0_1"/>
<dbReference type="InParanoid" id="Q86TS9"/>
<dbReference type="OMA" id="RSIDQKW"/>
<dbReference type="OrthoDB" id="10249237at2759"/>
<dbReference type="PAN-GO" id="Q86TS9">
    <property type="GO annotations" value="2 GO annotations based on evolutionary models"/>
</dbReference>
<dbReference type="PhylomeDB" id="Q86TS9"/>
<dbReference type="TreeFam" id="TF323872"/>
<dbReference type="PathwayCommons" id="Q86TS9"/>
<dbReference type="Reactome" id="R-HSA-5368286">
    <property type="pathway name" value="Mitochondrial translation initiation"/>
</dbReference>
<dbReference type="Reactome" id="R-HSA-5389840">
    <property type="pathway name" value="Mitochondrial translation elongation"/>
</dbReference>
<dbReference type="Reactome" id="R-HSA-5419276">
    <property type="pathway name" value="Mitochondrial translation termination"/>
</dbReference>
<dbReference type="SignaLink" id="Q86TS9"/>
<dbReference type="SIGNOR" id="Q86TS9"/>
<dbReference type="BioGRID-ORCS" id="122704">
    <property type="hits" value="76 hits in 1170 CRISPR screens"/>
</dbReference>
<dbReference type="ChiTaRS" id="MRPL52">
    <property type="organism name" value="human"/>
</dbReference>
<dbReference type="EvolutionaryTrace" id="Q86TS9"/>
<dbReference type="GenomeRNAi" id="122704"/>
<dbReference type="Pharos" id="Q86TS9">
    <property type="development level" value="Tdark"/>
</dbReference>
<dbReference type="PRO" id="PR:Q86TS9"/>
<dbReference type="Proteomes" id="UP000005640">
    <property type="component" value="Chromosome 14"/>
</dbReference>
<dbReference type="RNAct" id="Q86TS9">
    <property type="molecule type" value="protein"/>
</dbReference>
<dbReference type="Bgee" id="ENSG00000172590">
    <property type="expression patterns" value="Expressed in mucosa of transverse colon and 187 other cell types or tissues"/>
</dbReference>
<dbReference type="ExpressionAtlas" id="Q86TS9">
    <property type="expression patterns" value="baseline and differential"/>
</dbReference>
<dbReference type="GO" id="GO:0005743">
    <property type="term" value="C:mitochondrial inner membrane"/>
    <property type="evidence" value="ECO:0000304"/>
    <property type="project" value="Reactome"/>
</dbReference>
<dbReference type="GO" id="GO:0005762">
    <property type="term" value="C:mitochondrial large ribosomal subunit"/>
    <property type="evidence" value="ECO:0000314"/>
    <property type="project" value="UniProtKB"/>
</dbReference>
<dbReference type="GO" id="GO:0005739">
    <property type="term" value="C:mitochondrion"/>
    <property type="evidence" value="ECO:0000314"/>
    <property type="project" value="HPA"/>
</dbReference>
<dbReference type="GO" id="GO:0005654">
    <property type="term" value="C:nucleoplasm"/>
    <property type="evidence" value="ECO:0000314"/>
    <property type="project" value="HPA"/>
</dbReference>
<dbReference type="GO" id="GO:0003735">
    <property type="term" value="F:structural constituent of ribosome"/>
    <property type="evidence" value="ECO:0000250"/>
    <property type="project" value="UniProtKB"/>
</dbReference>
<dbReference type="GO" id="GO:0032543">
    <property type="term" value="P:mitochondrial translation"/>
    <property type="evidence" value="ECO:0000303"/>
    <property type="project" value="ComplexPortal"/>
</dbReference>
<dbReference type="GO" id="GO:0006412">
    <property type="term" value="P:translation"/>
    <property type="evidence" value="ECO:0000250"/>
    <property type="project" value="UniProtKB"/>
</dbReference>
<dbReference type="InterPro" id="IPR034596">
    <property type="entry name" value="Ribosomal_mL52"/>
</dbReference>
<dbReference type="PANTHER" id="PTHR34090">
    <property type="entry name" value="39S RIBOSOMAL PROTEIN L52, MITOCHONDRIAL"/>
    <property type="match status" value="1"/>
</dbReference>
<dbReference type="PANTHER" id="PTHR34090:SF1">
    <property type="entry name" value="LARGE RIBOSOMAL SUBUNIT PROTEIN ML52"/>
    <property type="match status" value="1"/>
</dbReference>
<dbReference type="Pfam" id="PF18699">
    <property type="entry name" value="MRPL52"/>
    <property type="match status" value="1"/>
</dbReference>
<proteinExistence type="evidence at protein level"/>
<accession>Q86TS9</accession>
<accession>A6NMQ8</accession>
<accession>A8MXK5</accession>
<accession>A8MYI6</accession>
<accession>G3XCN9</accession>
<accession>Q6NVH8</accession>
<organism>
    <name type="scientific">Homo sapiens</name>
    <name type="common">Human</name>
    <dbReference type="NCBI Taxonomy" id="9606"/>
    <lineage>
        <taxon>Eukaryota</taxon>
        <taxon>Metazoa</taxon>
        <taxon>Chordata</taxon>
        <taxon>Craniata</taxon>
        <taxon>Vertebrata</taxon>
        <taxon>Euteleostomi</taxon>
        <taxon>Mammalia</taxon>
        <taxon>Eutheria</taxon>
        <taxon>Euarchontoglires</taxon>
        <taxon>Primates</taxon>
        <taxon>Haplorrhini</taxon>
        <taxon>Catarrhini</taxon>
        <taxon>Hominidae</taxon>
        <taxon>Homo</taxon>
    </lineage>
</organism>
<gene>
    <name type="primary">MRPL52</name>
</gene>